<proteinExistence type="evidence at protein level"/>
<name>PA21_BOTHY</name>
<protein>
    <recommendedName>
        <fullName evidence="5">Basic phospholipase A2 Ph-TX1</fullName>
        <shortName>svPLA2</shortName>
        <ecNumber evidence="3">3.1.1.4</ecNumber>
    </recommendedName>
    <alternativeName>
        <fullName>Phosphatidylcholine 2-acylhydrolase</fullName>
    </alternativeName>
</protein>
<accession>P0DUN2</accession>
<keyword id="KW-0106">Calcium</keyword>
<keyword id="KW-0903">Direct protein sequencing</keyword>
<keyword id="KW-1015">Disulfide bond</keyword>
<keyword id="KW-0378">Hydrolase</keyword>
<keyword id="KW-0442">Lipid degradation</keyword>
<keyword id="KW-0443">Lipid metabolism</keyword>
<keyword id="KW-0479">Metal-binding</keyword>
<keyword id="KW-0959">Myotoxin</keyword>
<keyword id="KW-0964">Secreted</keyword>
<keyword id="KW-0800">Toxin</keyword>
<comment type="function">
    <text evidence="3">Snake venom phospholipase A2 (PLA2) that induces in vivo myotoxicity, moderates footpad edema, and causes in vitro neuromuscular blockade. PLA2 catalyzes the calcium-dependent hydrolysis of the 2-acyl groups in 3-sn-phosphoglycerides.</text>
</comment>
<comment type="catalytic activity">
    <reaction evidence="3">
        <text>a 1,2-diacyl-sn-glycero-3-phosphocholine + H2O = a 1-acyl-sn-glycero-3-phosphocholine + a fatty acid + H(+)</text>
        <dbReference type="Rhea" id="RHEA:15801"/>
        <dbReference type="ChEBI" id="CHEBI:15377"/>
        <dbReference type="ChEBI" id="CHEBI:15378"/>
        <dbReference type="ChEBI" id="CHEBI:28868"/>
        <dbReference type="ChEBI" id="CHEBI:57643"/>
        <dbReference type="ChEBI" id="CHEBI:58168"/>
        <dbReference type="EC" id="3.1.1.4"/>
    </reaction>
</comment>
<comment type="cofactor">
    <cofactor evidence="3">
        <name>Ca(2+)</name>
        <dbReference type="ChEBI" id="CHEBI:29108"/>
    </cofactor>
    <text evidence="1">Binds 1 Ca(2+) ion.</text>
</comment>
<comment type="activity regulation">
    <text evidence="3">Inhibited by divalent cations different from calcium ions (cadmium, magnesium, manganese, zinc), since they act as competitive antagonists of this cofactor.</text>
</comment>
<comment type="biophysicochemical properties">
    <kinetics>
        <KM evidence="3">1.96 mM for 4-nitro-3-(octanoyloxy) benzoic acid (NOBA)</KM>
        <Vmax evidence="3">11.76 nmol/min/mg enzyme</Vmax>
    </kinetics>
    <phDependence>
        <text evidence="3">Optimum pH is 8.0.</text>
    </phDependence>
    <temperatureDependence>
        <text evidence="3">Optimum temperature is 35-45 degrees Celsius.</text>
    </temperatureDependence>
</comment>
<comment type="subunit">
    <text evidence="3">Monomer.</text>
</comment>
<comment type="subcellular location">
    <subcellularLocation>
        <location evidence="3">Secreted</location>
    </subcellularLocation>
</comment>
<comment type="tissue specificity">
    <text evidence="7">Expressed by the venom gland.</text>
</comment>
<comment type="mass spectrometry"/>
<comment type="miscellaneous">
    <text evidence="4">Lys and Tyr residues play critical role in myotoxic, neurotoxic, and cytotoxic activities displayed by this toxin. In an other hand, His residues are relevant for edematogenic, neurotoxic, and myotoxic effects, but not for cytotoxic activity.</text>
</comment>
<comment type="similarity">
    <text evidence="6">Belongs to the phospholipase A2 family. Group II subfamily. D49 sub-subfamily.</text>
</comment>
<sequence>DLWEFGKMILKETGKNPFPYYGAYGCYCGWGGRGKPKDKTDDRCCFVHDCCRYKKLTGCPKTNDRYSYSWKDLTIVCGEDDPCKELCECDKAAAVCFRENLGTYNKKYRYHLRSLCKKADKPC</sequence>
<evidence type="ECO:0000250" key="1">
    <source>
        <dbReference type="UniProtKB" id="P14418"/>
    </source>
</evidence>
<evidence type="ECO:0000250" key="2">
    <source>
        <dbReference type="UniProtKB" id="P59071"/>
    </source>
</evidence>
<evidence type="ECO:0000269" key="3">
    <source>
    </source>
</evidence>
<evidence type="ECO:0000269" key="4">
    <source>
    </source>
</evidence>
<evidence type="ECO:0000303" key="5">
    <source>
    </source>
</evidence>
<evidence type="ECO:0000305" key="6"/>
<evidence type="ECO:0000305" key="7">
    <source>
    </source>
</evidence>
<reference key="1">
    <citation type="journal article" date="2011" name="Comp. Biochem. Physiol.">
        <title>Biochemical and pharmacological characterization of PhTX-I a new myotoxic phospholipase A2 isolated from Porthidium hyoprora snake venom.</title>
        <authorList>
            <person name="Huancahuire-Vega S."/>
            <person name="Ponce-Soto L.A."/>
            <person name="Martins-de-Souza D."/>
            <person name="Marangoni S."/>
        </authorList>
    </citation>
    <scope>PROTEIN SEQUENCE</scope>
    <scope>FUNCTION</scope>
    <scope>CATALYTIC ACTIVITY</scope>
    <scope>MASS SPECTROMETRY</scope>
    <scope>SUBUNIT</scope>
    <scope>SUBCELLULAR LOCATION</scope>
    <scope>BIOPHYSICOCHEMICAL PROPERTIES</scope>
    <source>
        <tissue>Venom</tissue>
    </source>
</reference>
<reference key="2">
    <citation type="journal article" date="2013" name="Biomed. Res. Int.">
        <title>Chemical modifications of PhTX-I myotoxin from Porthidium hyoprora snake venom: effects on structural, enzymatic, and pharmacological properties.</title>
        <authorList>
            <person name="Huancahuire-Vega S."/>
            <person name="Correa D.H."/>
            <person name="Hollanda L.M."/>
            <person name="Lancellotti M."/>
            <person name="Ramos C.H."/>
            <person name="Ponce-Soto L.A."/>
            <person name="Marangoni S."/>
        </authorList>
    </citation>
    <scope>FUNCTION OF CHEMICALLY MODIFIED DERIVATIVES</scope>
    <source>
        <tissue>Venom</tissue>
    </source>
</reference>
<organism>
    <name type="scientific">Bothrocophias hyoprora</name>
    <name type="common">Amazonian hognose viper</name>
    <name type="synonym">Porthidium hyoprora</name>
    <dbReference type="NCBI Taxonomy" id="230469"/>
    <lineage>
        <taxon>Eukaryota</taxon>
        <taxon>Metazoa</taxon>
        <taxon>Chordata</taxon>
        <taxon>Craniata</taxon>
        <taxon>Vertebrata</taxon>
        <taxon>Euteleostomi</taxon>
        <taxon>Lepidosauria</taxon>
        <taxon>Squamata</taxon>
        <taxon>Bifurcata</taxon>
        <taxon>Unidentata</taxon>
        <taxon>Episquamata</taxon>
        <taxon>Toxicofera</taxon>
        <taxon>Serpentes</taxon>
        <taxon>Colubroidea</taxon>
        <taxon>Viperidae</taxon>
        <taxon>Crotalinae</taxon>
        <taxon>Bothrocophias</taxon>
    </lineage>
</organism>
<dbReference type="EC" id="3.1.1.4" evidence="3"/>
<dbReference type="SMR" id="P0DUN2"/>
<dbReference type="GO" id="GO:0005576">
    <property type="term" value="C:extracellular region"/>
    <property type="evidence" value="ECO:0007669"/>
    <property type="project" value="UniProtKB-SubCell"/>
</dbReference>
<dbReference type="GO" id="GO:0005509">
    <property type="term" value="F:calcium ion binding"/>
    <property type="evidence" value="ECO:0007669"/>
    <property type="project" value="InterPro"/>
</dbReference>
<dbReference type="GO" id="GO:0047498">
    <property type="term" value="F:calcium-dependent phospholipase A2 activity"/>
    <property type="evidence" value="ECO:0007669"/>
    <property type="project" value="TreeGrafter"/>
</dbReference>
<dbReference type="GO" id="GO:0005543">
    <property type="term" value="F:phospholipid binding"/>
    <property type="evidence" value="ECO:0007669"/>
    <property type="project" value="TreeGrafter"/>
</dbReference>
<dbReference type="GO" id="GO:0090729">
    <property type="term" value="F:toxin activity"/>
    <property type="evidence" value="ECO:0007669"/>
    <property type="project" value="UniProtKB-KW"/>
</dbReference>
<dbReference type="GO" id="GO:0050482">
    <property type="term" value="P:arachidonate secretion"/>
    <property type="evidence" value="ECO:0007669"/>
    <property type="project" value="InterPro"/>
</dbReference>
<dbReference type="GO" id="GO:0016042">
    <property type="term" value="P:lipid catabolic process"/>
    <property type="evidence" value="ECO:0007669"/>
    <property type="project" value="UniProtKB-KW"/>
</dbReference>
<dbReference type="GO" id="GO:0042130">
    <property type="term" value="P:negative regulation of T cell proliferation"/>
    <property type="evidence" value="ECO:0007669"/>
    <property type="project" value="TreeGrafter"/>
</dbReference>
<dbReference type="GO" id="GO:0006644">
    <property type="term" value="P:phospholipid metabolic process"/>
    <property type="evidence" value="ECO:0007669"/>
    <property type="project" value="InterPro"/>
</dbReference>
<dbReference type="CDD" id="cd00125">
    <property type="entry name" value="PLA2c"/>
    <property type="match status" value="1"/>
</dbReference>
<dbReference type="FunFam" id="1.20.90.10:FF:000001">
    <property type="entry name" value="Basic phospholipase A2 homolog"/>
    <property type="match status" value="1"/>
</dbReference>
<dbReference type="Gene3D" id="1.20.90.10">
    <property type="entry name" value="Phospholipase A2 domain"/>
    <property type="match status" value="1"/>
</dbReference>
<dbReference type="InterPro" id="IPR001211">
    <property type="entry name" value="PLipase_A2"/>
</dbReference>
<dbReference type="InterPro" id="IPR033112">
    <property type="entry name" value="PLipase_A2_Asp_AS"/>
</dbReference>
<dbReference type="InterPro" id="IPR016090">
    <property type="entry name" value="PLipase_A2_dom"/>
</dbReference>
<dbReference type="InterPro" id="IPR036444">
    <property type="entry name" value="PLipase_A2_dom_sf"/>
</dbReference>
<dbReference type="InterPro" id="IPR033113">
    <property type="entry name" value="PLipase_A2_His_AS"/>
</dbReference>
<dbReference type="PANTHER" id="PTHR11716">
    <property type="entry name" value="PHOSPHOLIPASE A2 FAMILY MEMBER"/>
    <property type="match status" value="1"/>
</dbReference>
<dbReference type="PANTHER" id="PTHR11716:SF9">
    <property type="entry name" value="PHOSPHOLIPASE A2, MEMBRANE ASSOCIATED"/>
    <property type="match status" value="1"/>
</dbReference>
<dbReference type="Pfam" id="PF00068">
    <property type="entry name" value="Phospholip_A2_1"/>
    <property type="match status" value="1"/>
</dbReference>
<dbReference type="PRINTS" id="PR00389">
    <property type="entry name" value="PHPHLIPASEA2"/>
</dbReference>
<dbReference type="SMART" id="SM00085">
    <property type="entry name" value="PA2c"/>
    <property type="match status" value="1"/>
</dbReference>
<dbReference type="SUPFAM" id="SSF48619">
    <property type="entry name" value="Phospholipase A2, PLA2"/>
    <property type="match status" value="1"/>
</dbReference>
<dbReference type="PROSITE" id="PS00119">
    <property type="entry name" value="PA2_ASP"/>
    <property type="match status" value="1"/>
</dbReference>
<dbReference type="PROSITE" id="PS00118">
    <property type="entry name" value="PA2_HIS"/>
    <property type="match status" value="1"/>
</dbReference>
<feature type="chain" id="PRO_0000452841" description="Basic phospholipase A2 Ph-TX1" evidence="3">
    <location>
        <begin position="1"/>
        <end position="123"/>
    </location>
</feature>
<feature type="active site" evidence="1">
    <location>
        <position position="48"/>
    </location>
</feature>
<feature type="active site" evidence="1">
    <location>
        <position position="90"/>
    </location>
</feature>
<feature type="binding site" evidence="2">
    <location>
        <position position="27"/>
    </location>
    <ligand>
        <name>Ca(2+)</name>
        <dbReference type="ChEBI" id="CHEBI:29108"/>
    </ligand>
</feature>
<feature type="binding site" evidence="2">
    <location>
        <position position="29"/>
    </location>
    <ligand>
        <name>Ca(2+)</name>
        <dbReference type="ChEBI" id="CHEBI:29108"/>
    </ligand>
</feature>
<feature type="binding site" evidence="2">
    <location>
        <position position="31"/>
    </location>
    <ligand>
        <name>Ca(2+)</name>
        <dbReference type="ChEBI" id="CHEBI:29108"/>
    </ligand>
</feature>
<feature type="binding site" evidence="2">
    <location>
        <position position="49"/>
    </location>
    <ligand>
        <name>Ca(2+)</name>
        <dbReference type="ChEBI" id="CHEBI:29108"/>
    </ligand>
</feature>
<feature type="disulfide bond" evidence="2">
    <location>
        <begin position="28"/>
        <end position="45"/>
    </location>
</feature>
<feature type="disulfide bond" evidence="2">
    <location>
        <begin position="44"/>
        <end position="96"/>
    </location>
</feature>
<feature type="disulfide bond" evidence="2">
    <location>
        <begin position="50"/>
        <end position="123"/>
    </location>
</feature>
<feature type="disulfide bond" evidence="2">
    <location>
        <begin position="51"/>
        <end position="89"/>
    </location>
</feature>
<feature type="disulfide bond" evidence="2">
    <location>
        <begin position="59"/>
        <end position="83"/>
    </location>
</feature>
<feature type="disulfide bond" evidence="2">
    <location>
        <begin position="77"/>
        <end position="87"/>
    </location>
</feature>